<name>FSR1_GIBF5</name>
<keyword id="KW-0012">Acyltransferase</keyword>
<keyword id="KW-0596">Phosphopantetheine</keyword>
<keyword id="KW-0597">Phosphoprotein</keyword>
<keyword id="KW-1185">Reference proteome</keyword>
<keyword id="KW-0808">Transferase</keyword>
<evidence type="ECO:0000255" key="1"/>
<evidence type="ECO:0000255" key="2">
    <source>
        <dbReference type="PROSITE-ProRule" id="PRU00258"/>
    </source>
</evidence>
<evidence type="ECO:0000255" key="3">
    <source>
        <dbReference type="PROSITE-ProRule" id="PRU01348"/>
    </source>
</evidence>
<evidence type="ECO:0000255" key="4">
    <source>
        <dbReference type="PROSITE-ProRule" id="PRU01363"/>
    </source>
</evidence>
<evidence type="ECO:0000255" key="5">
    <source>
        <dbReference type="PROSITE-ProRule" id="PRU10022"/>
    </source>
</evidence>
<evidence type="ECO:0000256" key="6">
    <source>
        <dbReference type="SAM" id="MobiDB-lite"/>
    </source>
</evidence>
<evidence type="ECO:0000269" key="7">
    <source>
    </source>
</evidence>
<evidence type="ECO:0000269" key="8">
    <source>
    </source>
</evidence>
<evidence type="ECO:0000303" key="9">
    <source>
    </source>
</evidence>
<evidence type="ECO:0000303" key="10">
    <source>
    </source>
</evidence>
<evidence type="ECO:0000305" key="11">
    <source>
    </source>
</evidence>
<reference key="1">
    <citation type="journal article" date="2012" name="Appl. Environ. Microbiol.">
        <title>Biosynthesis of fusarubins accounts for pigmentation of Fusarium fujikuroi perithecia.</title>
        <authorList>
            <person name="Studt L."/>
            <person name="Wiemann P."/>
            <person name="Kleigrewe K."/>
            <person name="Humpf H.U."/>
            <person name="Tudzynski B."/>
        </authorList>
    </citation>
    <scope>NUCLEOTIDE SEQUENCE [GENOMIC DNA]</scope>
    <scope>FUNCTION</scope>
    <scope>DOMAIN</scope>
    <scope>DISRUPTION PHENOTYPE</scope>
    <scope>INDUCTION</scope>
    <scope>PATHWAY</scope>
    <source>
        <strain>CBS 195.34 / IMI 58289 / NRRL A-6831</strain>
    </source>
</reference>
<reference key="2">
    <citation type="journal article" date="2013" name="PLoS Pathog.">
        <title>Deciphering the cryptic genome: genome-wide analyses of the rice pathogen Fusarium fujikuroi reveal complex regulation of secondary metabolism and novel metabolites.</title>
        <authorList>
            <person name="Wiemann P."/>
            <person name="Sieber C.M.K."/>
            <person name="von Bargen K.W."/>
            <person name="Studt L."/>
            <person name="Niehaus E.-M."/>
            <person name="Espino J.J."/>
            <person name="Huss K."/>
            <person name="Michielse C.B."/>
            <person name="Albermann S."/>
            <person name="Wagner D."/>
            <person name="Bergner S.V."/>
            <person name="Connolly L.R."/>
            <person name="Fischer A."/>
            <person name="Reuter G."/>
            <person name="Kleigrewe K."/>
            <person name="Bald T."/>
            <person name="Wingfield B.D."/>
            <person name="Ophir R."/>
            <person name="Freeman S."/>
            <person name="Hippler M."/>
            <person name="Smith K.M."/>
            <person name="Brown D.W."/>
            <person name="Proctor R.H."/>
            <person name="Muensterkoetter M."/>
            <person name="Freitag M."/>
            <person name="Humpf H.-U."/>
            <person name="Gueldener U."/>
            <person name="Tudzynski B."/>
        </authorList>
    </citation>
    <scope>NUCLEOTIDE SEQUENCE [LARGE SCALE GENOMIC DNA]</scope>
    <scope>FUNCTION</scope>
    <source>
        <strain>CBS 195.34 / IMI 58289 / NRRL A-6831</strain>
    </source>
</reference>
<protein>
    <recommendedName>
        <fullName evidence="9">Non-reducing polyketide synthase fsr1</fullName>
        <ecNumber evidence="7">2.3.1.-</ecNumber>
    </recommendedName>
    <alternativeName>
        <fullName evidence="9">Fusarubin biosynthesis cluster protein 1</fullName>
    </alternativeName>
    <alternativeName>
        <fullName evidence="10">Pigmentless perithecia protein 1</fullName>
    </alternativeName>
    <alternativeName>
        <fullName evidence="10">Polyketide synthase 3</fullName>
    </alternativeName>
</protein>
<comment type="function">
    <text evidence="7 8">Non-reducing polyketide synthase; part of the gene cluster that mediates the biosynthesis of fusarubins, highly pigmented naphthoquinones responsible for the coloration of the fruiting bodies (PubMed:22492438, PubMed:23825955). The non-reducing polyketide synthase FSR1 is responsible for the condensation of seven acetyl-CoA units to yield a haptaketide (PubMed:22492438). After rings A and B are formed by aldol-type cyclization, the PKS-derived product is released as 6-O-demethylfusarubinaldehyde (PubMed:22492438). Then, two hydroxyl groups at C-5 and C-10 are incorporated by FSR3, and simultaneously hydroxyl groups at C-6 and C-8 are methylated by FSR2 (PubMed:22492438). The aldehyde is, on the one hand, reduced by FSR3 to 8-O-methylfusarubin alcohol, which equilibrates mainly with 8-O-methylfusarubin and only small amounts of 8-O-methylnectriafurone (PubMed:22492438). On the other hand, the aldehyde can be oxidized to form 8-O-methylfusarubinic acid, a reaction driven by FSR3 equilibrating with 8-O-methylfusarubinlactone, finally resulting in 8-O-methylanhydrofusarubinlactol after a further reduction step and loss of water (PubMed:22492438). 8-O-Methylfusarubinic acid can also undergo decarboxylation, resulting in 8-O-methyl-13-hydroxynorjavanicin after another hydroxylation step at C-13 (PubMed:22492438). Both steps are most likely also accomplished by FSR3 (PubMed:22492438). No enzymatic function has been determined so far for either FSR4 and FSR5 (PubMed:22492438). Their deletion does not alter the product spectrum, but the possibility that they catalyze specific enzymatic steps during perithecium development cannot be ruled out (PubMed:22492438). FSR4 might possess a regulatory function in the biosynthesis of fusarubins (PubMed:22492438).</text>
</comment>
<comment type="pathway">
    <text evidence="7">Polyketide biosynthesis.</text>
</comment>
<comment type="induction">
    <text evidence="7">Expression is induced in presence of sodium nitrate, and repressed by glutamine (PubMed:22492438).</text>
</comment>
<comment type="domain">
    <text evidence="11">Multidomain protein; including a starter unit:ACP transacylase (SAT) that selects the starter unit; a ketosynthase (KS) that catalyzes repeated decarboxylative condensation to elongate the polyketide back-bone; a malonyl-CoA:ACP transacylase (MAT) that selects and transfers the extender unit malonyl-CoA; a product template (PT) domain that controls the immediate cyclization regioselectivity of the reactive polyketide backbone; and 2 acyl-carrier protein (ACP) that serve as the tethers of the growing and complete polyketide via their phosphopantetheinyl arm (PubMed:22492438). At the C-terminus, FSR1 exhibits a reductase (R) domain instead of the canonical TE domain (PubMed:22492438). In contrast to TE and TE/CLC domains, R domains show sequence similarities to the short-chain dehydrogenase/reductase (SDR) superfamily, exhibiting Rossman fold structure and nucleotide binding motifs (PubMed:22492438).</text>
</comment>
<comment type="disruption phenotype">
    <text evidence="7">Impairs the red pigmentation due to the production of fusarubin (PubMed:22492438). Results in complete down-regulation of the other five FSR genes (PubMed:22492438).</text>
</comment>
<sequence>MASHMKLYLFGDQTFDVQPHLQHLLQKRDNLFLHEFLNQSYNALRAELFKIPYSIRKDLPRFTCQEDLLLWDQSGPRCVALDMAMTTLYQLGTFISQAGISSYDAQNSRVVGLCTGAFAAAAVSCSSFTADLIPMAVSSVVAAFRTGLLVTDTARRVDPSQDLNRSWALLVPGQKAAKAFQEFWDANDGGVLTSMPYISAYAPNGITVSGPPQRLGDLAHWLASKSITSKAIPIYSAYHAPHLYSQKDARRIVDGLMLNKAVSPSEQIPLLSSTGSKPEERSFATLLEDAIAQALLHPLRWGSIFDDVQAALETTGSQQFSVQSIGSNAEHLIYTALKKTSLRYLVPETTVPSQPTSVPSVPDAGTSKPKLAIVAMSGRFPGAKDNEAYWDLLYKGLDVHKPVPSLRWDQQTHVDPTGAGKNTSATPFGCWLDDPSEFDARFFNISPREAPQIDPAQRLALMTAYEAIEQAGIVPDATPSTRPDRVGIFYGVTSNDWMETNSAQNIDTYYIPGGNRAFIPGRINYFFKFSGPSYAVDTACSSSLAGIHLACNALWQGDVDTAIAGGTNVLTNPDYHAGLDRGHFLSRTGNCKTFDDGADGYCRGEGVATIIIKRLDDAIAENDPILGVVLGAHTNHSAESESITRPHVGAQRVIFNKILNEAAVDPYSVSYVEMHGTGTQAGDATEMSSVLETFAPPVAEGKVARPESQKLYIGSAKANIGHGEAASGVCSVIKVLQMLKKDTIVPHCGIKNKINHRFPTDLEQRNVRIAMGPTQWKKGTEINPRRVFVNNFSAAGGNSALLIQDAPPRKQLIASNDSRIQFPIAITAKSGVSLQGNMRSMLKFLSTNSHVSLAELSYTTTARRIHHQHRVLIPGATSEEICSKIETALQNNTGVTRPKAAPKVVFTFTGQGAQYPGMGKQLFEENEFVRNELLSLDRIAQNLGFPSMLPFIQSDEPDVSKFAPSLVQLASVCLQITLSKLWASWGITPTAVVGHSLGEYAALNVAGVLSDTDTLFLVGGRAQLLEQKCTRGTHAMLVVKGSQEEITEALKGQEYETACINSPIETVLAGPNEQIAKVKEQLAAASFKTTLLKVPYAFHSSQLEPMVSDIEKLAGKVTFSDPKIPILCPLEGTVIENANPFNASYLARHSRQPVNMLTALTTAYRDGYLSDRSMVLEVGPHPAVSGMVKPTLGQQITCVASLQRRRAPWDMLSAALKSLYDAGASINWVDYQSNFPGAHTVVDLPAYSWDLKEYWIQYVNDWSLRKGDPPLVINNVSKLESTTIHSVVEESGDSEKTGIVVEADIARKDLSPLVQGHEVDGIPLCTPSVYADIALTLGKYLLERYQPQQKDDMVVVSDMTVSKALILRGDGSRHPIQAHAEADWSSQSVSIKFMSFDNKGNLQEHSACVVLFKDRSHQDALQSEALTTKQKMQNLRNQITTGESARFNRPMAYRMIRPLARFHDDYRAIDEVVLNSETLEASSKISFGTVKRDGDFHTHPAVIDALTQSCGFAMNCNDHTDIDVDVYMNHGWGSLELFEPLDFEKEYTTYTQMHAGEDKLWYGDVTIFDQDRVVAFFGQIAIQGVPRRVLKVILSIESGKKGQPQRQTQDKPRNTPSQTKDSTPKPAQNKPAAKVEPPKFSTAIRIISEESGIDVSDFTDGTTFADVGIDSLLGLTISARFQEELDIDLDFNALFFEHPTVKDLRAFLGADEDVSESSSSAASDSGRDTTTTGSATPELQEEFAESAEVEFERALEIISEESGVARSDLDDETNFADCGVDSLLSLVIASRFQDTFGLNIAHEQLFMECQTVGDLKTMLAREMGLATPASKPAAIPAPVVSEAVAQETVVTHSDTSNLAEREQAITELVNKYTAGFKAPTSNPNGPPLGKNESVVLVTGASGGLGSHLVYALAQLEEVHTVVCLNRPNREDPTTRQYKAMRDKGIRFPEHLKSKVRIFQTDTSKPKLGVADSEYASLIRSVTHIIHNAWPMSAKRPLSGFESQFQVFRNLLDLGRECASNRPADFKFSFQMISSIGVVGQWGLAAGQTGKIVVPEERTTIDSLLGNGYAEAKWGCERMLDETLHKFTDRFRPMVVRLGQIAGSKTSGYWNPMEHFGFLIKSSQTLNALPDVDGNLNWTPVNDIADTLTDLILSDRTPYPIYHIDNPIGQQWRDVNNILSDTLRIPNKVPFKEWLDMVRKAPQQDNPAALLADFLEDTYLRMACGGLVLDVKHSLEHSKSLSAVGPVSETVVRKYIHIWKEIGFLKTTAEDKAGFEAERLRLWGPRV</sequence>
<proteinExistence type="evidence at transcript level"/>
<feature type="chain" id="PRO_0000442024" description="Non-reducing polyketide synthase fsr1">
    <location>
        <begin position="1"/>
        <end position="2286"/>
    </location>
</feature>
<feature type="domain" description="Ketosynthase family 3 (KS3)" evidence="3 11">
    <location>
        <begin position="368"/>
        <end position="805"/>
    </location>
</feature>
<feature type="domain" description="PKS/mFAS DH" evidence="4">
    <location>
        <begin position="1285"/>
        <end position="1591"/>
    </location>
</feature>
<feature type="domain" description="Carrier 1" evidence="2 11">
    <location>
        <begin position="1637"/>
        <end position="1712"/>
    </location>
</feature>
<feature type="domain" description="Carrier 2" evidence="2 11">
    <location>
        <begin position="1748"/>
        <end position="1823"/>
    </location>
</feature>
<feature type="region of interest" description="N-terminal acylcarrier protein transacylase domain (SAT)" evidence="1 11">
    <location>
        <begin position="7"/>
        <end position="342"/>
    </location>
</feature>
<feature type="region of interest" description="Acyl/malonyl transferases" evidence="1 11">
    <location>
        <begin position="905"/>
        <end position="1195"/>
    </location>
</feature>
<feature type="region of interest" description="N-terminal hotdog fold" evidence="4">
    <location>
        <begin position="1285"/>
        <end position="1417"/>
    </location>
</feature>
<feature type="region of interest" description="Product template (PT) domainn" evidence="1 11">
    <location>
        <begin position="1296"/>
        <end position="1588"/>
    </location>
</feature>
<feature type="region of interest" description="C-terminal hotdog fold" evidence="4">
    <location>
        <begin position="1444"/>
        <end position="1591"/>
    </location>
</feature>
<feature type="region of interest" description="Disordered" evidence="6">
    <location>
        <begin position="1600"/>
        <end position="1639"/>
    </location>
</feature>
<feature type="region of interest" description="Disordered" evidence="6">
    <location>
        <begin position="1716"/>
        <end position="1735"/>
    </location>
</feature>
<feature type="region of interest" description="Reductase (R) domain" evidence="1 11">
    <location>
        <begin position="1897"/>
        <end position="2145"/>
    </location>
</feature>
<feature type="active site" description="For beta-ketoacyl synthase activity" evidence="3">
    <location>
        <position position="540"/>
    </location>
</feature>
<feature type="active site" description="For beta-ketoacyl synthase activity" evidence="3">
    <location>
        <position position="675"/>
    </location>
</feature>
<feature type="active site" description="For beta-ketoacyl synthase activity" evidence="3">
    <location>
        <position position="722"/>
    </location>
</feature>
<feature type="active site" description="For acyl/malonyl transferase activity" evidence="5">
    <location>
        <position position="996"/>
    </location>
</feature>
<feature type="active site" description="Proton acceptor; for dehydratase activity" evidence="4">
    <location>
        <position position="1317"/>
    </location>
</feature>
<feature type="active site" description="Proton donor; for dehydratase activity" evidence="4">
    <location>
        <position position="1504"/>
    </location>
</feature>
<feature type="modified residue" description="O-(pantetheine 4'-phosphoryl)serine" evidence="2">
    <location>
        <position position="1671"/>
    </location>
</feature>
<feature type="modified residue" description="O-(pantetheine 4'-phosphoryl)serine" evidence="2">
    <location>
        <position position="1782"/>
    </location>
</feature>
<accession>S0DTP6</accession>
<accession>G8C419</accession>
<gene>
    <name evidence="9" type="primary">FSR1</name>
    <name evidence="10" type="synonym">PGL1</name>
    <name evidence="10" type="synonym">PKS3</name>
    <name type="ORF">FFUJ_03984</name>
</gene>
<organism>
    <name type="scientific">Gibberella fujikuroi (strain CBS 195.34 / IMI 58289 / NRRL A-6831)</name>
    <name type="common">Bakanae and foot rot disease fungus</name>
    <name type="synonym">Fusarium fujikuroi</name>
    <dbReference type="NCBI Taxonomy" id="1279085"/>
    <lineage>
        <taxon>Eukaryota</taxon>
        <taxon>Fungi</taxon>
        <taxon>Dikarya</taxon>
        <taxon>Ascomycota</taxon>
        <taxon>Pezizomycotina</taxon>
        <taxon>Sordariomycetes</taxon>
        <taxon>Hypocreomycetidae</taxon>
        <taxon>Hypocreales</taxon>
        <taxon>Nectriaceae</taxon>
        <taxon>Fusarium</taxon>
        <taxon>Fusarium fujikuroi species complex</taxon>
    </lineage>
</organism>
<dbReference type="EC" id="2.3.1.-" evidence="7"/>
<dbReference type="EMBL" id="HE613440">
    <property type="protein sequence ID" value="CCE67070.1"/>
    <property type="molecule type" value="Genomic_DNA"/>
</dbReference>
<dbReference type="EMBL" id="HF679024">
    <property type="protein sequence ID" value="CCT64762.1"/>
    <property type="molecule type" value="Genomic_DNA"/>
</dbReference>
<dbReference type="SMR" id="S0DTP6"/>
<dbReference type="STRING" id="1279085.S0DTP6"/>
<dbReference type="VEuPathDB" id="FungiDB:FFUJ_03984"/>
<dbReference type="Proteomes" id="UP000016800">
    <property type="component" value="Chromosome 2"/>
</dbReference>
<dbReference type="GO" id="GO:0004315">
    <property type="term" value="F:3-oxoacyl-[acyl-carrier-protein] synthase activity"/>
    <property type="evidence" value="ECO:0007669"/>
    <property type="project" value="InterPro"/>
</dbReference>
<dbReference type="GO" id="GO:0004312">
    <property type="term" value="F:fatty acid synthase activity"/>
    <property type="evidence" value="ECO:0007669"/>
    <property type="project" value="TreeGrafter"/>
</dbReference>
<dbReference type="GO" id="GO:0031177">
    <property type="term" value="F:phosphopantetheine binding"/>
    <property type="evidence" value="ECO:0007669"/>
    <property type="project" value="InterPro"/>
</dbReference>
<dbReference type="GO" id="GO:0006633">
    <property type="term" value="P:fatty acid biosynthetic process"/>
    <property type="evidence" value="ECO:0007669"/>
    <property type="project" value="InterPro"/>
</dbReference>
<dbReference type="GO" id="GO:0044550">
    <property type="term" value="P:secondary metabolite biosynthetic process"/>
    <property type="evidence" value="ECO:0007669"/>
    <property type="project" value="TreeGrafter"/>
</dbReference>
<dbReference type="CDD" id="cd00833">
    <property type="entry name" value="PKS"/>
    <property type="match status" value="1"/>
</dbReference>
<dbReference type="FunFam" id="1.10.1200.10:FF:000011">
    <property type="entry name" value="Sterigmatocystin biosynthesis polyketide synthase"/>
    <property type="match status" value="2"/>
</dbReference>
<dbReference type="FunFam" id="3.10.129.110:FF:000001">
    <property type="entry name" value="Sterigmatocystin biosynthesis polyketide synthase"/>
    <property type="match status" value="1"/>
</dbReference>
<dbReference type="FunFam" id="3.40.47.10:FF:000031">
    <property type="entry name" value="Sterigmatocystin biosynthesis polyketide synthase"/>
    <property type="match status" value="1"/>
</dbReference>
<dbReference type="Gene3D" id="3.30.70.3290">
    <property type="match status" value="1"/>
</dbReference>
<dbReference type="Gene3D" id="3.40.47.10">
    <property type="match status" value="1"/>
</dbReference>
<dbReference type="Gene3D" id="1.10.1200.10">
    <property type="entry name" value="ACP-like"/>
    <property type="match status" value="2"/>
</dbReference>
<dbReference type="Gene3D" id="3.40.366.10">
    <property type="entry name" value="Malonyl-Coenzyme A Acyl Carrier Protein, domain 2"/>
    <property type="match status" value="2"/>
</dbReference>
<dbReference type="Gene3D" id="3.40.50.720">
    <property type="entry name" value="NAD(P)-binding Rossmann-like Domain"/>
    <property type="match status" value="1"/>
</dbReference>
<dbReference type="Gene3D" id="3.10.129.110">
    <property type="entry name" value="Polyketide synthase dehydratase"/>
    <property type="match status" value="1"/>
</dbReference>
<dbReference type="InterPro" id="IPR001227">
    <property type="entry name" value="Ac_transferase_dom_sf"/>
</dbReference>
<dbReference type="InterPro" id="IPR036736">
    <property type="entry name" value="ACP-like_sf"/>
</dbReference>
<dbReference type="InterPro" id="IPR014043">
    <property type="entry name" value="Acyl_transferase_dom"/>
</dbReference>
<dbReference type="InterPro" id="IPR016035">
    <property type="entry name" value="Acyl_Trfase/lysoPLipase"/>
</dbReference>
<dbReference type="InterPro" id="IPR013120">
    <property type="entry name" value="Far_NAD-bd"/>
</dbReference>
<dbReference type="InterPro" id="IPR018201">
    <property type="entry name" value="Ketoacyl_synth_AS"/>
</dbReference>
<dbReference type="InterPro" id="IPR014031">
    <property type="entry name" value="Ketoacyl_synth_C"/>
</dbReference>
<dbReference type="InterPro" id="IPR014030">
    <property type="entry name" value="Ketoacyl_synth_N"/>
</dbReference>
<dbReference type="InterPro" id="IPR016036">
    <property type="entry name" value="Malonyl_transacylase_ACP-bd"/>
</dbReference>
<dbReference type="InterPro" id="IPR036291">
    <property type="entry name" value="NAD(P)-bd_dom_sf"/>
</dbReference>
<dbReference type="InterPro" id="IPR020841">
    <property type="entry name" value="PKS_Beta-ketoAc_synthase_dom"/>
</dbReference>
<dbReference type="InterPro" id="IPR042104">
    <property type="entry name" value="PKS_dehydratase_sf"/>
</dbReference>
<dbReference type="InterPro" id="IPR049900">
    <property type="entry name" value="PKS_mFAS_DH"/>
</dbReference>
<dbReference type="InterPro" id="IPR050091">
    <property type="entry name" value="PKS_NRPS_Biosynth_Enz"/>
</dbReference>
<dbReference type="InterPro" id="IPR020806">
    <property type="entry name" value="PKS_PP-bd"/>
</dbReference>
<dbReference type="InterPro" id="IPR009081">
    <property type="entry name" value="PP-bd_ACP"/>
</dbReference>
<dbReference type="InterPro" id="IPR006162">
    <property type="entry name" value="Ppantetheine_attach_site"/>
</dbReference>
<dbReference type="InterPro" id="IPR030918">
    <property type="entry name" value="PT_fungal_PKS"/>
</dbReference>
<dbReference type="InterPro" id="IPR032088">
    <property type="entry name" value="SAT"/>
</dbReference>
<dbReference type="InterPro" id="IPR016039">
    <property type="entry name" value="Thiolase-like"/>
</dbReference>
<dbReference type="NCBIfam" id="TIGR04532">
    <property type="entry name" value="PT_fungal_PKS"/>
    <property type="match status" value="1"/>
</dbReference>
<dbReference type="PANTHER" id="PTHR43775">
    <property type="entry name" value="FATTY ACID SYNTHASE"/>
    <property type="match status" value="1"/>
</dbReference>
<dbReference type="PANTHER" id="PTHR43775:SF40">
    <property type="entry name" value="NORSOLORINIC ACID SYNTHASE STCA"/>
    <property type="match status" value="1"/>
</dbReference>
<dbReference type="Pfam" id="PF00698">
    <property type="entry name" value="Acyl_transf_1"/>
    <property type="match status" value="1"/>
</dbReference>
<dbReference type="Pfam" id="PF22621">
    <property type="entry name" value="CurL-like_PKS_C"/>
    <property type="match status" value="1"/>
</dbReference>
<dbReference type="Pfam" id="PF00109">
    <property type="entry name" value="ketoacyl-synt"/>
    <property type="match status" value="1"/>
</dbReference>
<dbReference type="Pfam" id="PF02801">
    <property type="entry name" value="Ketoacyl-synt_C"/>
    <property type="match status" value="1"/>
</dbReference>
<dbReference type="Pfam" id="PF07993">
    <property type="entry name" value="NAD_binding_4"/>
    <property type="match status" value="1"/>
</dbReference>
<dbReference type="Pfam" id="PF00550">
    <property type="entry name" value="PP-binding"/>
    <property type="match status" value="2"/>
</dbReference>
<dbReference type="Pfam" id="PF16073">
    <property type="entry name" value="SAT"/>
    <property type="match status" value="1"/>
</dbReference>
<dbReference type="SMART" id="SM00827">
    <property type="entry name" value="PKS_AT"/>
    <property type="match status" value="1"/>
</dbReference>
<dbReference type="SMART" id="SM00825">
    <property type="entry name" value="PKS_KS"/>
    <property type="match status" value="1"/>
</dbReference>
<dbReference type="SMART" id="SM00823">
    <property type="entry name" value="PKS_PP"/>
    <property type="match status" value="2"/>
</dbReference>
<dbReference type="SUPFAM" id="SSF47336">
    <property type="entry name" value="ACP-like"/>
    <property type="match status" value="2"/>
</dbReference>
<dbReference type="SUPFAM" id="SSF52151">
    <property type="entry name" value="FabD/lysophospholipase-like"/>
    <property type="match status" value="1"/>
</dbReference>
<dbReference type="SUPFAM" id="SSF51735">
    <property type="entry name" value="NAD(P)-binding Rossmann-fold domains"/>
    <property type="match status" value="1"/>
</dbReference>
<dbReference type="SUPFAM" id="SSF55048">
    <property type="entry name" value="Probable ACP-binding domain of malonyl-CoA ACP transacylase"/>
    <property type="match status" value="1"/>
</dbReference>
<dbReference type="SUPFAM" id="SSF53901">
    <property type="entry name" value="Thiolase-like"/>
    <property type="match status" value="1"/>
</dbReference>
<dbReference type="PROSITE" id="PS50075">
    <property type="entry name" value="CARRIER"/>
    <property type="match status" value="2"/>
</dbReference>
<dbReference type="PROSITE" id="PS00606">
    <property type="entry name" value="KS3_1"/>
    <property type="match status" value="1"/>
</dbReference>
<dbReference type="PROSITE" id="PS52004">
    <property type="entry name" value="KS3_2"/>
    <property type="match status" value="1"/>
</dbReference>
<dbReference type="PROSITE" id="PS00012">
    <property type="entry name" value="PHOSPHOPANTETHEINE"/>
    <property type="match status" value="1"/>
</dbReference>
<dbReference type="PROSITE" id="PS52019">
    <property type="entry name" value="PKS_MFAS_DH"/>
    <property type="match status" value="1"/>
</dbReference>